<dbReference type="EC" id="3.1.1.-"/>
<dbReference type="EMBL" id="AC005311">
    <property type="protein sequence ID" value="AAC63840.1"/>
    <property type="status" value="ALT_SEQ"/>
    <property type="molecule type" value="Genomic_DNA"/>
</dbReference>
<dbReference type="EMBL" id="CP002685">
    <property type="protein sequence ID" value="AEC08493.2"/>
    <property type="molecule type" value="Genomic_DNA"/>
</dbReference>
<dbReference type="PIR" id="E84716">
    <property type="entry name" value="E84716"/>
</dbReference>
<dbReference type="RefSeq" id="NP_180668.6">
    <property type="nucleotide sequence ID" value="NM_128666.5"/>
</dbReference>
<dbReference type="SMR" id="O82274"/>
<dbReference type="BioGRID" id="1868">
    <property type="interactions" value="7"/>
</dbReference>
<dbReference type="FunCoup" id="O82274">
    <property type="interactions" value="11"/>
</dbReference>
<dbReference type="ESTHER" id="arath-PLA19">
    <property type="family name" value="Plant_phospholipase"/>
</dbReference>
<dbReference type="iPTMnet" id="O82274"/>
<dbReference type="PaxDb" id="3702-AT2G31100.1"/>
<dbReference type="ProteomicsDB" id="235005"/>
<dbReference type="DNASU" id="816513"/>
<dbReference type="GeneID" id="817666"/>
<dbReference type="KEGG" id="ath:AT2G31100"/>
<dbReference type="Araport" id="AT2G31100"/>
<dbReference type="TAIR" id="AT2G31100"/>
<dbReference type="eggNOG" id="KOG4569">
    <property type="taxonomic scope" value="Eukaryota"/>
</dbReference>
<dbReference type="HOGENOM" id="CLU_018841_0_0_1"/>
<dbReference type="InParanoid" id="O82274"/>
<dbReference type="BioCyc" id="ARA:AT2G31100-MONOMER"/>
<dbReference type="PRO" id="PR:O82274"/>
<dbReference type="Proteomes" id="UP000006548">
    <property type="component" value="Chromosome 2"/>
</dbReference>
<dbReference type="ExpressionAtlas" id="O82274">
    <property type="expression patterns" value="baseline and differential"/>
</dbReference>
<dbReference type="GO" id="GO:0005737">
    <property type="term" value="C:cytoplasm"/>
    <property type="evidence" value="ECO:0000250"/>
    <property type="project" value="UniProtKB"/>
</dbReference>
<dbReference type="GO" id="GO:0008970">
    <property type="term" value="F:phospholipase A1 activity"/>
    <property type="evidence" value="ECO:0000250"/>
    <property type="project" value="UniProtKB"/>
</dbReference>
<dbReference type="GO" id="GO:0016042">
    <property type="term" value="P:lipid catabolic process"/>
    <property type="evidence" value="ECO:0007669"/>
    <property type="project" value="UniProtKB-KW"/>
</dbReference>
<dbReference type="CDD" id="cd00519">
    <property type="entry name" value="Lipase_3"/>
    <property type="match status" value="1"/>
</dbReference>
<dbReference type="FunFam" id="3.40.50.1820:FF:000065">
    <property type="entry name" value="Phospholipase A1-II 3"/>
    <property type="match status" value="1"/>
</dbReference>
<dbReference type="Gene3D" id="3.40.50.1820">
    <property type="entry name" value="alpha/beta hydrolase"/>
    <property type="match status" value="1"/>
</dbReference>
<dbReference type="InterPro" id="IPR029058">
    <property type="entry name" value="AB_hydrolase_fold"/>
</dbReference>
<dbReference type="InterPro" id="IPR002921">
    <property type="entry name" value="Fungal_lipase-type"/>
</dbReference>
<dbReference type="InterPro" id="IPR033556">
    <property type="entry name" value="PLA"/>
</dbReference>
<dbReference type="PANTHER" id="PTHR31828:SF16">
    <property type="entry name" value="PHOSPHOLIPASE A1-IIBETA"/>
    <property type="match status" value="1"/>
</dbReference>
<dbReference type="PANTHER" id="PTHR31828">
    <property type="entry name" value="PHOSPHOLIPASE A1-IIGAMMA"/>
    <property type="match status" value="1"/>
</dbReference>
<dbReference type="Pfam" id="PF01764">
    <property type="entry name" value="Lipase_3"/>
    <property type="match status" value="1"/>
</dbReference>
<dbReference type="SUPFAM" id="SSF53474">
    <property type="entry name" value="alpha/beta-Hydrolases"/>
    <property type="match status" value="1"/>
</dbReference>
<dbReference type="PROSITE" id="PS00120">
    <property type="entry name" value="LIPASE_SER"/>
    <property type="match status" value="1"/>
</dbReference>
<sequence>MVGDIATRWKELSGSSKWKDLLDPLDLDLRRYILHYGDMAEVGYLAFNSDRRSKYVGDSCYTKEELFARTGYLKANPFRYEVTKYIYGTSSIRLPECFIIKSLSREAWNKESNWLGYIAVATDEGKKLLGRRGIVVAWRGTIQLYEWANDFDFPLESAVMVFPGANPNDEPRVANGWLSLYTSTDPRSRFDKTSAQEQVQEELKRLLELYKNEDVTITLTGHSLGAVMSILSAADFLHNEWPKITPSLQHSLCVTVFAFGSPQIGDRSFKRLVESLEHLHILRVTNVPDLIPRYPVFRFTDIGEELQINTLKSEYLKRSLNLGHFHNLEAYLHGVAGTQHNQGEFKLEINRDIALVNKGLDALEDKYLVPGHWWVLENKGMVQSDDGTWKLNGDRSKKKQEEEDEKEENNCKFP</sequence>
<proteinExistence type="evidence at protein level"/>
<protein>
    <recommendedName>
        <fullName>Phospholipase A1-IIbeta</fullName>
        <ecNumber>3.1.1.-</ecNumber>
    </recommendedName>
</protein>
<evidence type="ECO:0000250" key="1"/>
<evidence type="ECO:0000255" key="2"/>
<evidence type="ECO:0000255" key="3">
    <source>
        <dbReference type="PROSITE-ProRule" id="PRU10037"/>
    </source>
</evidence>
<evidence type="ECO:0000256" key="4">
    <source>
        <dbReference type="SAM" id="MobiDB-lite"/>
    </source>
</evidence>
<evidence type="ECO:0000305" key="5"/>
<evidence type="ECO:0007744" key="6">
    <source>
    </source>
</evidence>
<organism>
    <name type="scientific">Arabidopsis thaliana</name>
    <name type="common">Mouse-ear cress</name>
    <dbReference type="NCBI Taxonomy" id="3702"/>
    <lineage>
        <taxon>Eukaryota</taxon>
        <taxon>Viridiplantae</taxon>
        <taxon>Streptophyta</taxon>
        <taxon>Embryophyta</taxon>
        <taxon>Tracheophyta</taxon>
        <taxon>Spermatophyta</taxon>
        <taxon>Magnoliopsida</taxon>
        <taxon>eudicotyledons</taxon>
        <taxon>Gunneridae</taxon>
        <taxon>Pentapetalae</taxon>
        <taxon>rosids</taxon>
        <taxon>malvids</taxon>
        <taxon>Brassicales</taxon>
        <taxon>Brassicaceae</taxon>
        <taxon>Camelineae</taxon>
        <taxon>Arabidopsis</taxon>
    </lineage>
</organism>
<feature type="chain" id="PRO_0000409359" description="Phospholipase A1-IIbeta">
    <location>
        <begin position="1"/>
        <end position="414"/>
    </location>
</feature>
<feature type="region of interest" description="Disordered" evidence="4">
    <location>
        <begin position="386"/>
        <end position="414"/>
    </location>
</feature>
<feature type="coiled-coil region" evidence="2">
    <location>
        <begin position="191"/>
        <end position="217"/>
    </location>
</feature>
<feature type="coiled-coil region" evidence="2">
    <location>
        <begin position="390"/>
        <end position="410"/>
    </location>
</feature>
<feature type="compositionally biased region" description="Basic and acidic residues" evidence="4">
    <location>
        <begin position="392"/>
        <end position="401"/>
    </location>
</feature>
<feature type="active site" description="Acyl-ester intermediate" evidence="1">
    <location>
        <position position="223"/>
    </location>
</feature>
<feature type="active site" description="Charge relay system" evidence="3">
    <location>
        <position position="223"/>
    </location>
</feature>
<feature type="active site" description="Charge relay system" evidence="3">
    <location>
        <position position="289"/>
    </location>
</feature>
<feature type="active site" description="Charge relay system" evidence="3">
    <location>
        <position position="326"/>
    </location>
</feature>
<feature type="cross-link" description="Glycyl lysine isopeptide (Lys-Gly) (interchain with G-Cter in ubiquitin)" evidence="6">
    <location>
        <position position="19"/>
    </location>
</feature>
<name>PLA19_ARATH</name>
<reference key="1">
    <citation type="journal article" date="1999" name="Nature">
        <title>Sequence and analysis of chromosome 2 of the plant Arabidopsis thaliana.</title>
        <authorList>
            <person name="Lin X."/>
            <person name="Kaul S."/>
            <person name="Rounsley S.D."/>
            <person name="Shea T.P."/>
            <person name="Benito M.-I."/>
            <person name="Town C.D."/>
            <person name="Fujii C.Y."/>
            <person name="Mason T.M."/>
            <person name="Bowman C.L."/>
            <person name="Barnstead M.E."/>
            <person name="Feldblyum T.V."/>
            <person name="Buell C.R."/>
            <person name="Ketchum K.A."/>
            <person name="Lee J.J."/>
            <person name="Ronning C.M."/>
            <person name="Koo H.L."/>
            <person name="Moffat K.S."/>
            <person name="Cronin L.A."/>
            <person name="Shen M."/>
            <person name="Pai G."/>
            <person name="Van Aken S."/>
            <person name="Umayam L."/>
            <person name="Tallon L.J."/>
            <person name="Gill J.E."/>
            <person name="Adams M.D."/>
            <person name="Carrera A.J."/>
            <person name="Creasy T.H."/>
            <person name="Goodman H.M."/>
            <person name="Somerville C.R."/>
            <person name="Copenhaver G.P."/>
            <person name="Preuss D."/>
            <person name="Nierman W.C."/>
            <person name="White O."/>
            <person name="Eisen J.A."/>
            <person name="Salzberg S.L."/>
            <person name="Fraser C.M."/>
            <person name="Venter J.C."/>
        </authorList>
    </citation>
    <scope>NUCLEOTIDE SEQUENCE [LARGE SCALE GENOMIC DNA]</scope>
    <source>
        <strain>cv. Columbia</strain>
    </source>
</reference>
<reference key="2">
    <citation type="journal article" date="2017" name="Plant J.">
        <title>Araport11: a complete reannotation of the Arabidopsis thaliana reference genome.</title>
        <authorList>
            <person name="Cheng C.Y."/>
            <person name="Krishnakumar V."/>
            <person name="Chan A.P."/>
            <person name="Thibaud-Nissen F."/>
            <person name="Schobel S."/>
            <person name="Town C.D."/>
        </authorList>
    </citation>
    <scope>GENOME REANNOTATION</scope>
    <source>
        <strain>cv. Columbia</strain>
    </source>
</reference>
<reference key="3">
    <citation type="journal article" date="2004" name="Trends Plant Sci.">
        <title>Phospholipid-derived signaling mediated by phospholipase A in plants.</title>
        <authorList>
            <person name="Ryu S.B."/>
        </authorList>
    </citation>
    <scope>GENE FAMILY</scope>
    <scope>NOMENCLATURE</scope>
</reference>
<reference key="4">
    <citation type="journal article" date="2007" name="Mol. Cell. Proteomics">
        <title>Multidimensional protein identification technology (MudPIT) analysis of ubiquitinated proteins in plants.</title>
        <authorList>
            <person name="Maor R."/>
            <person name="Jones A."/>
            <person name="Nuehse T.S."/>
            <person name="Studholme D.J."/>
            <person name="Peck S.C."/>
            <person name="Shirasu K."/>
        </authorList>
    </citation>
    <scope>UBIQUITINATION [LARGE SCALE ANALYSIS] AT LYS-19</scope>
    <scope>IDENTIFICATION BY MASS SPECTROMETRY [LARGE SCALE ANALYSIS]</scope>
    <source>
        <strain>cv. Landsberg erecta</strain>
    </source>
</reference>
<comment type="function">
    <text evidence="1">Acylhydrolase that catalyzes the hydrolysis of phospholipids at the sn-1 position.</text>
</comment>
<comment type="subcellular location">
    <subcellularLocation>
        <location evidence="1">Cytoplasm</location>
    </subcellularLocation>
</comment>
<comment type="similarity">
    <text evidence="5">Belongs to the AB hydrolase superfamily. Lipase family.</text>
</comment>
<comment type="sequence caution" evidence="5">
    <conflict type="erroneous termination">
        <sequence resource="EMBL-CDS" id="AAC63840"/>
    </conflict>
    <text>Truncated C-terminus.</text>
</comment>
<keyword id="KW-0175">Coiled coil</keyword>
<keyword id="KW-0963">Cytoplasm</keyword>
<keyword id="KW-0378">Hydrolase</keyword>
<keyword id="KW-1017">Isopeptide bond</keyword>
<keyword id="KW-0442">Lipid degradation</keyword>
<keyword id="KW-0443">Lipid metabolism</keyword>
<keyword id="KW-1185">Reference proteome</keyword>
<keyword id="KW-0832">Ubl conjugation</keyword>
<gene>
    <name type="ordered locus">At2g31100</name>
    <name type="ORF">T16B12.9</name>
</gene>
<accession>O82274</accession>